<feature type="chain" id="PRO_0000257316" description="Ribosomal RNA small subunit methyltransferase A">
    <location>
        <begin position="1"/>
        <end position="273"/>
    </location>
</feature>
<feature type="binding site" evidence="1">
    <location>
        <position position="20"/>
    </location>
    <ligand>
        <name>S-adenosyl-L-methionine</name>
        <dbReference type="ChEBI" id="CHEBI:59789"/>
    </ligand>
</feature>
<feature type="binding site" evidence="1">
    <location>
        <position position="22"/>
    </location>
    <ligand>
        <name>S-adenosyl-L-methionine</name>
        <dbReference type="ChEBI" id="CHEBI:59789"/>
    </ligand>
</feature>
<feature type="binding site" evidence="1">
    <location>
        <position position="47"/>
    </location>
    <ligand>
        <name>S-adenosyl-L-methionine</name>
        <dbReference type="ChEBI" id="CHEBI:59789"/>
    </ligand>
</feature>
<feature type="binding site" evidence="1">
    <location>
        <position position="68"/>
    </location>
    <ligand>
        <name>S-adenosyl-L-methionine</name>
        <dbReference type="ChEBI" id="CHEBI:59789"/>
    </ligand>
</feature>
<feature type="binding site" evidence="1">
    <location>
        <position position="90"/>
    </location>
    <ligand>
        <name>S-adenosyl-L-methionine</name>
        <dbReference type="ChEBI" id="CHEBI:59789"/>
    </ligand>
</feature>
<feature type="binding site" evidence="1">
    <location>
        <position position="110"/>
    </location>
    <ligand>
        <name>S-adenosyl-L-methionine</name>
        <dbReference type="ChEBI" id="CHEBI:59789"/>
    </ligand>
</feature>
<protein>
    <recommendedName>
        <fullName evidence="1">Ribosomal RNA small subunit methyltransferase A</fullName>
        <ecNumber evidence="1">2.1.1.182</ecNumber>
    </recommendedName>
    <alternativeName>
        <fullName evidence="1">16S rRNA (adenine(1518)-N(6)/adenine(1519)-N(6))-dimethyltransferase</fullName>
    </alternativeName>
    <alternativeName>
        <fullName evidence="1">16S rRNA dimethyladenosine transferase</fullName>
    </alternativeName>
    <alternativeName>
        <fullName evidence="1">16S rRNA dimethylase</fullName>
    </alternativeName>
    <alternativeName>
        <fullName evidence="1">S-adenosylmethionine-6-N', N'-adenosyl(rRNA) dimethyltransferase</fullName>
    </alternativeName>
</protein>
<gene>
    <name evidence="1" type="primary">rsmA</name>
    <name evidence="1" type="synonym">ksgA</name>
    <name type="ordered locus">Plut_1287</name>
</gene>
<dbReference type="EC" id="2.1.1.182" evidence="1"/>
<dbReference type="EMBL" id="CP000096">
    <property type="protein sequence ID" value="ABB24147.1"/>
    <property type="molecule type" value="Genomic_DNA"/>
</dbReference>
<dbReference type="RefSeq" id="WP_011358019.1">
    <property type="nucleotide sequence ID" value="NC_007512.1"/>
</dbReference>
<dbReference type="SMR" id="Q3B3D4"/>
<dbReference type="STRING" id="319225.Plut_1287"/>
<dbReference type="KEGG" id="plt:Plut_1287"/>
<dbReference type="eggNOG" id="COG0030">
    <property type="taxonomic scope" value="Bacteria"/>
</dbReference>
<dbReference type="HOGENOM" id="CLU_041220_0_1_10"/>
<dbReference type="OrthoDB" id="9814755at2"/>
<dbReference type="Proteomes" id="UP000002709">
    <property type="component" value="Chromosome"/>
</dbReference>
<dbReference type="GO" id="GO:0005829">
    <property type="term" value="C:cytosol"/>
    <property type="evidence" value="ECO:0007669"/>
    <property type="project" value="TreeGrafter"/>
</dbReference>
<dbReference type="GO" id="GO:0052908">
    <property type="term" value="F:16S rRNA (adenine(1518)-N(6)/adenine(1519)-N(6))-dimethyltransferase activity"/>
    <property type="evidence" value="ECO:0007669"/>
    <property type="project" value="UniProtKB-EC"/>
</dbReference>
<dbReference type="GO" id="GO:0003723">
    <property type="term" value="F:RNA binding"/>
    <property type="evidence" value="ECO:0007669"/>
    <property type="project" value="UniProtKB-KW"/>
</dbReference>
<dbReference type="CDD" id="cd02440">
    <property type="entry name" value="AdoMet_MTases"/>
    <property type="match status" value="1"/>
</dbReference>
<dbReference type="Gene3D" id="1.10.8.100">
    <property type="entry name" value="Ribosomal RNA adenine dimethylase-like, domain 2"/>
    <property type="match status" value="1"/>
</dbReference>
<dbReference type="Gene3D" id="3.40.50.150">
    <property type="entry name" value="Vaccinia Virus protein VP39"/>
    <property type="match status" value="1"/>
</dbReference>
<dbReference type="HAMAP" id="MF_00607">
    <property type="entry name" value="16SrRNA_methyltr_A"/>
    <property type="match status" value="1"/>
</dbReference>
<dbReference type="InterPro" id="IPR001737">
    <property type="entry name" value="KsgA/Erm"/>
</dbReference>
<dbReference type="InterPro" id="IPR023165">
    <property type="entry name" value="rRNA_Ade_diMease-like_C"/>
</dbReference>
<dbReference type="InterPro" id="IPR020596">
    <property type="entry name" value="rRNA_Ade_Mease_Trfase_CS"/>
</dbReference>
<dbReference type="InterPro" id="IPR020598">
    <property type="entry name" value="rRNA_Ade_methylase_Trfase_N"/>
</dbReference>
<dbReference type="InterPro" id="IPR011530">
    <property type="entry name" value="rRNA_adenine_dimethylase"/>
</dbReference>
<dbReference type="InterPro" id="IPR029063">
    <property type="entry name" value="SAM-dependent_MTases_sf"/>
</dbReference>
<dbReference type="NCBIfam" id="TIGR00755">
    <property type="entry name" value="ksgA"/>
    <property type="match status" value="1"/>
</dbReference>
<dbReference type="PANTHER" id="PTHR11727">
    <property type="entry name" value="DIMETHYLADENOSINE TRANSFERASE"/>
    <property type="match status" value="1"/>
</dbReference>
<dbReference type="PANTHER" id="PTHR11727:SF7">
    <property type="entry name" value="DIMETHYLADENOSINE TRANSFERASE-RELATED"/>
    <property type="match status" value="1"/>
</dbReference>
<dbReference type="Pfam" id="PF00398">
    <property type="entry name" value="RrnaAD"/>
    <property type="match status" value="1"/>
</dbReference>
<dbReference type="SMART" id="SM00650">
    <property type="entry name" value="rADc"/>
    <property type="match status" value="1"/>
</dbReference>
<dbReference type="SUPFAM" id="SSF53335">
    <property type="entry name" value="S-adenosyl-L-methionine-dependent methyltransferases"/>
    <property type="match status" value="1"/>
</dbReference>
<dbReference type="PROSITE" id="PS01131">
    <property type="entry name" value="RRNA_A_DIMETH"/>
    <property type="match status" value="1"/>
</dbReference>
<dbReference type="PROSITE" id="PS51689">
    <property type="entry name" value="SAM_RNA_A_N6_MT"/>
    <property type="match status" value="1"/>
</dbReference>
<name>RSMA_CHLL3</name>
<comment type="function">
    <text evidence="1">Specifically dimethylates two adjacent adenosines (A1518 and A1519) in the loop of a conserved hairpin near the 3'-end of 16S rRNA in the 30S particle. May play a critical role in biogenesis of 30S subunits.</text>
</comment>
<comment type="catalytic activity">
    <reaction evidence="1">
        <text>adenosine(1518)/adenosine(1519) in 16S rRNA + 4 S-adenosyl-L-methionine = N(6)-dimethyladenosine(1518)/N(6)-dimethyladenosine(1519) in 16S rRNA + 4 S-adenosyl-L-homocysteine + 4 H(+)</text>
        <dbReference type="Rhea" id="RHEA:19609"/>
        <dbReference type="Rhea" id="RHEA-COMP:10232"/>
        <dbReference type="Rhea" id="RHEA-COMP:10233"/>
        <dbReference type="ChEBI" id="CHEBI:15378"/>
        <dbReference type="ChEBI" id="CHEBI:57856"/>
        <dbReference type="ChEBI" id="CHEBI:59789"/>
        <dbReference type="ChEBI" id="CHEBI:74411"/>
        <dbReference type="ChEBI" id="CHEBI:74493"/>
        <dbReference type="EC" id="2.1.1.182"/>
    </reaction>
</comment>
<comment type="subcellular location">
    <subcellularLocation>
        <location evidence="1">Cytoplasm</location>
    </subcellularLocation>
</comment>
<comment type="similarity">
    <text evidence="1">Belongs to the class I-like SAM-binding methyltransferase superfamily. rRNA adenine N(6)-methyltransferase family. RsmA subfamily.</text>
</comment>
<sequence length="273" mass="30685">MTRVEYKHTEIAVKKKLGQNFLTDRNITRKIVAASGAGSQDRILEIGPGFGALTREILEVCPAFTVVEKDRALAAFIRQEYPQLQLIEADFLDIDLERLAAGGPLRVLGNIPYSITTPILFKLLENRRSITSATLMMQHEVAARLVATPSTKEYGILAVQLQTFCDVRYLFKVGRKVFRPQPNVDSAVISMVPKKNVAVEDAQAFSRFVRTAFHQRRKTLYNNLKDAYMLQAVDEGTLKLRAEALSIEKLADLFKLVQPLPAGEPPMKRDGRR</sequence>
<proteinExistence type="inferred from homology"/>
<accession>Q3B3D4</accession>
<keyword id="KW-0963">Cytoplasm</keyword>
<keyword id="KW-0489">Methyltransferase</keyword>
<keyword id="KW-1185">Reference proteome</keyword>
<keyword id="KW-0694">RNA-binding</keyword>
<keyword id="KW-0698">rRNA processing</keyword>
<keyword id="KW-0949">S-adenosyl-L-methionine</keyword>
<keyword id="KW-0808">Transferase</keyword>
<reference key="1">
    <citation type="submission" date="2005-08" db="EMBL/GenBank/DDBJ databases">
        <title>Complete sequence of Pelodictyon luteolum DSM 273.</title>
        <authorList>
            <consortium name="US DOE Joint Genome Institute"/>
            <person name="Copeland A."/>
            <person name="Lucas S."/>
            <person name="Lapidus A."/>
            <person name="Barry K."/>
            <person name="Detter J.C."/>
            <person name="Glavina T."/>
            <person name="Hammon N."/>
            <person name="Israni S."/>
            <person name="Pitluck S."/>
            <person name="Bryant D."/>
            <person name="Schmutz J."/>
            <person name="Larimer F."/>
            <person name="Land M."/>
            <person name="Kyrpides N."/>
            <person name="Ivanova N."/>
            <person name="Richardson P."/>
        </authorList>
    </citation>
    <scope>NUCLEOTIDE SEQUENCE [LARGE SCALE GENOMIC DNA]</scope>
    <source>
        <strain>DSM 273 / BCRC 81028 / 2530</strain>
    </source>
</reference>
<evidence type="ECO:0000255" key="1">
    <source>
        <dbReference type="HAMAP-Rule" id="MF_00607"/>
    </source>
</evidence>
<organism>
    <name type="scientific">Chlorobium luteolum (strain DSM 273 / BCRC 81028 / 2530)</name>
    <name type="common">Pelodictyon luteolum</name>
    <dbReference type="NCBI Taxonomy" id="319225"/>
    <lineage>
        <taxon>Bacteria</taxon>
        <taxon>Pseudomonadati</taxon>
        <taxon>Chlorobiota</taxon>
        <taxon>Chlorobiia</taxon>
        <taxon>Chlorobiales</taxon>
        <taxon>Chlorobiaceae</taxon>
        <taxon>Chlorobium/Pelodictyon group</taxon>
        <taxon>Pelodictyon</taxon>
    </lineage>
</organism>